<keyword id="KW-0067">ATP-binding</keyword>
<keyword id="KW-0997">Cell inner membrane</keyword>
<keyword id="KW-1003">Cell membrane</keyword>
<keyword id="KW-0472">Membrane</keyword>
<keyword id="KW-0547">Nucleotide-binding</keyword>
<keyword id="KW-1185">Reference proteome</keyword>
<keyword id="KW-1278">Translocase</keyword>
<keyword id="KW-0813">Transport</keyword>
<sequence>MNNYLLKCENINKFYQEGENQTQVLKGVSFSMEPAELVAIVGSSGSGKSTLLHTLGGLDQPSSGEVFINGQSLQKASANELAALRNRYLGFVYQFHHLMADFTALENVMMPMLIGHQNKTEAKDRAEKMLSAVGLSHRITHRPSALSGGERQRVAIARALVNNPSLVLADEPTGNLDHKTTESIFELIQQLNQEQNIAFLLVTHDMGLAEKLSRRLVMQDGLLKEGA</sequence>
<name>LOLD_HAEIN</name>
<proteinExistence type="inferred from homology"/>
<dbReference type="EC" id="7.6.2.-" evidence="1"/>
<dbReference type="EMBL" id="L42023">
    <property type="protein sequence ID" value="AAC23199.1"/>
    <property type="molecule type" value="Genomic_DNA"/>
</dbReference>
<dbReference type="PIR" id="A64129">
    <property type="entry name" value="A64129"/>
</dbReference>
<dbReference type="RefSeq" id="NP_439698.1">
    <property type="nucleotide sequence ID" value="NC_000907.1"/>
</dbReference>
<dbReference type="SMR" id="P45247"/>
<dbReference type="STRING" id="71421.HI_1549"/>
<dbReference type="EnsemblBacteria" id="AAC23199">
    <property type="protein sequence ID" value="AAC23199"/>
    <property type="gene ID" value="HI_1549"/>
</dbReference>
<dbReference type="KEGG" id="hin:HI_1549"/>
<dbReference type="PATRIC" id="fig|71421.8.peg.1620"/>
<dbReference type="eggNOG" id="COG1136">
    <property type="taxonomic scope" value="Bacteria"/>
</dbReference>
<dbReference type="HOGENOM" id="CLU_000604_1_22_6"/>
<dbReference type="OrthoDB" id="9801477at2"/>
<dbReference type="PhylomeDB" id="P45247"/>
<dbReference type="BioCyc" id="HINF71421:G1GJ1-1569-MONOMER"/>
<dbReference type="Proteomes" id="UP000000579">
    <property type="component" value="Chromosome"/>
</dbReference>
<dbReference type="GO" id="GO:0005886">
    <property type="term" value="C:plasma membrane"/>
    <property type="evidence" value="ECO:0000318"/>
    <property type="project" value="GO_Central"/>
</dbReference>
<dbReference type="GO" id="GO:0005524">
    <property type="term" value="F:ATP binding"/>
    <property type="evidence" value="ECO:0007669"/>
    <property type="project" value="UniProtKB-KW"/>
</dbReference>
<dbReference type="GO" id="GO:0016887">
    <property type="term" value="F:ATP hydrolysis activity"/>
    <property type="evidence" value="ECO:0007669"/>
    <property type="project" value="InterPro"/>
</dbReference>
<dbReference type="GO" id="GO:0022857">
    <property type="term" value="F:transmembrane transporter activity"/>
    <property type="evidence" value="ECO:0000318"/>
    <property type="project" value="GO_Central"/>
</dbReference>
<dbReference type="GO" id="GO:0044874">
    <property type="term" value="P:lipoprotein localization to outer membrane"/>
    <property type="evidence" value="ECO:0000318"/>
    <property type="project" value="GO_Central"/>
</dbReference>
<dbReference type="GO" id="GO:0089705">
    <property type="term" value="P:protein localization to outer membrane"/>
    <property type="evidence" value="ECO:0000318"/>
    <property type="project" value="GO_Central"/>
</dbReference>
<dbReference type="GO" id="GO:0055085">
    <property type="term" value="P:transmembrane transport"/>
    <property type="evidence" value="ECO:0000318"/>
    <property type="project" value="GO_Central"/>
</dbReference>
<dbReference type="CDD" id="cd03255">
    <property type="entry name" value="ABC_MJ0796_LolCDE_FtsE"/>
    <property type="match status" value="1"/>
</dbReference>
<dbReference type="FunFam" id="3.40.50.300:FF:000230">
    <property type="entry name" value="Lipoprotein-releasing system ATP-binding protein LolD"/>
    <property type="match status" value="1"/>
</dbReference>
<dbReference type="Gene3D" id="3.40.50.300">
    <property type="entry name" value="P-loop containing nucleotide triphosphate hydrolases"/>
    <property type="match status" value="1"/>
</dbReference>
<dbReference type="InterPro" id="IPR003593">
    <property type="entry name" value="AAA+_ATPase"/>
</dbReference>
<dbReference type="InterPro" id="IPR003439">
    <property type="entry name" value="ABC_transporter-like_ATP-bd"/>
</dbReference>
<dbReference type="InterPro" id="IPR017871">
    <property type="entry name" value="ABC_transporter-like_CS"/>
</dbReference>
<dbReference type="InterPro" id="IPR015854">
    <property type="entry name" value="ABC_transpr_LolD-like"/>
</dbReference>
<dbReference type="InterPro" id="IPR011924">
    <property type="entry name" value="LolD_lipo_ATP-bd"/>
</dbReference>
<dbReference type="InterPro" id="IPR017911">
    <property type="entry name" value="MacB-like_ATP-bd"/>
</dbReference>
<dbReference type="InterPro" id="IPR027417">
    <property type="entry name" value="P-loop_NTPase"/>
</dbReference>
<dbReference type="NCBIfam" id="TIGR02211">
    <property type="entry name" value="LolD_lipo_ex"/>
    <property type="match status" value="1"/>
</dbReference>
<dbReference type="PANTHER" id="PTHR24220">
    <property type="entry name" value="IMPORT ATP-BINDING PROTEIN"/>
    <property type="match status" value="1"/>
</dbReference>
<dbReference type="PANTHER" id="PTHR24220:SF689">
    <property type="entry name" value="LIPOPROTEIN-RELEASING SYSTEM ATP-BINDING PROTEIN LOLD"/>
    <property type="match status" value="1"/>
</dbReference>
<dbReference type="Pfam" id="PF00005">
    <property type="entry name" value="ABC_tran"/>
    <property type="match status" value="1"/>
</dbReference>
<dbReference type="SMART" id="SM00382">
    <property type="entry name" value="AAA"/>
    <property type="match status" value="1"/>
</dbReference>
<dbReference type="SUPFAM" id="SSF52540">
    <property type="entry name" value="P-loop containing nucleoside triphosphate hydrolases"/>
    <property type="match status" value="1"/>
</dbReference>
<dbReference type="PROSITE" id="PS00211">
    <property type="entry name" value="ABC_TRANSPORTER_1"/>
    <property type="match status" value="1"/>
</dbReference>
<dbReference type="PROSITE" id="PS50893">
    <property type="entry name" value="ABC_TRANSPORTER_2"/>
    <property type="match status" value="1"/>
</dbReference>
<dbReference type="PROSITE" id="PS51244">
    <property type="entry name" value="LOLD"/>
    <property type="match status" value="1"/>
</dbReference>
<reference key="1">
    <citation type="journal article" date="1995" name="Science">
        <title>Whole-genome random sequencing and assembly of Haemophilus influenzae Rd.</title>
        <authorList>
            <person name="Fleischmann R.D."/>
            <person name="Adams M.D."/>
            <person name="White O."/>
            <person name="Clayton R.A."/>
            <person name="Kirkness E.F."/>
            <person name="Kerlavage A.R."/>
            <person name="Bult C.J."/>
            <person name="Tomb J.-F."/>
            <person name="Dougherty B.A."/>
            <person name="Merrick J.M."/>
            <person name="McKenney K."/>
            <person name="Sutton G.G."/>
            <person name="FitzHugh W."/>
            <person name="Fields C.A."/>
            <person name="Gocayne J.D."/>
            <person name="Scott J.D."/>
            <person name="Shirley R."/>
            <person name="Liu L.-I."/>
            <person name="Glodek A."/>
            <person name="Kelley J.M."/>
            <person name="Weidman J.F."/>
            <person name="Phillips C.A."/>
            <person name="Spriggs T."/>
            <person name="Hedblom E."/>
            <person name="Cotton M.D."/>
            <person name="Utterback T.R."/>
            <person name="Hanna M.C."/>
            <person name="Nguyen D.T."/>
            <person name="Saudek D.M."/>
            <person name="Brandon R.C."/>
            <person name="Fine L.D."/>
            <person name="Fritchman J.L."/>
            <person name="Fuhrmann J.L."/>
            <person name="Geoghagen N.S.M."/>
            <person name="Gnehm C.L."/>
            <person name="McDonald L.A."/>
            <person name="Small K.V."/>
            <person name="Fraser C.M."/>
            <person name="Smith H.O."/>
            <person name="Venter J.C."/>
        </authorList>
    </citation>
    <scope>NUCLEOTIDE SEQUENCE [LARGE SCALE GENOMIC DNA]</scope>
    <source>
        <strain>ATCC 51907 / DSM 11121 / KW20 / Rd</strain>
    </source>
</reference>
<accession>P45247</accession>
<organism>
    <name type="scientific">Haemophilus influenzae (strain ATCC 51907 / DSM 11121 / KW20 / Rd)</name>
    <dbReference type="NCBI Taxonomy" id="71421"/>
    <lineage>
        <taxon>Bacteria</taxon>
        <taxon>Pseudomonadati</taxon>
        <taxon>Pseudomonadota</taxon>
        <taxon>Gammaproteobacteria</taxon>
        <taxon>Pasteurellales</taxon>
        <taxon>Pasteurellaceae</taxon>
        <taxon>Haemophilus</taxon>
    </lineage>
</organism>
<protein>
    <recommendedName>
        <fullName evidence="1">Lipoprotein-releasing system ATP-binding protein LolD</fullName>
        <ecNumber evidence="1">7.6.2.-</ecNumber>
    </recommendedName>
</protein>
<feature type="chain" id="PRO_0000092439" description="Lipoprotein-releasing system ATP-binding protein LolD">
    <location>
        <begin position="1"/>
        <end position="227"/>
    </location>
</feature>
<feature type="domain" description="ABC transporter" evidence="1">
    <location>
        <begin position="6"/>
        <end position="227"/>
    </location>
</feature>
<feature type="binding site" evidence="1">
    <location>
        <begin position="42"/>
        <end position="49"/>
    </location>
    <ligand>
        <name>ATP</name>
        <dbReference type="ChEBI" id="CHEBI:30616"/>
    </ligand>
</feature>
<comment type="function">
    <text evidence="1">Part of the ABC transporter complex LolCDE involved in the translocation of mature outer membrane-directed lipoproteins, from the inner membrane to the periplasmic chaperone, LolA. Responsible for the formation of the LolA-lipoprotein complex in an ATP-dependent manner.</text>
</comment>
<comment type="subunit">
    <text evidence="1">The complex is composed of two ATP-binding proteins (LolD) and two transmembrane proteins (LolC and LolE).</text>
</comment>
<comment type="subcellular location">
    <subcellularLocation>
        <location evidence="1">Cell inner membrane</location>
        <topology evidence="1">Peripheral membrane protein</topology>
    </subcellularLocation>
</comment>
<comment type="similarity">
    <text evidence="1">Belongs to the ABC transporter superfamily. Lipoprotein translocase (TC 3.A.1.125) family.</text>
</comment>
<gene>
    <name evidence="1" type="primary">lolD</name>
    <name type="ordered locus">HI_1549</name>
</gene>
<evidence type="ECO:0000255" key="1">
    <source>
        <dbReference type="HAMAP-Rule" id="MF_01708"/>
    </source>
</evidence>